<gene>
    <name evidence="1" type="primary">argH</name>
    <name type="ordered locus">Ccel_1344</name>
</gene>
<organism>
    <name type="scientific">Ruminiclostridium cellulolyticum (strain ATCC 35319 / DSM 5812 / JCM 6584 / H10)</name>
    <name type="common">Clostridium cellulolyticum</name>
    <dbReference type="NCBI Taxonomy" id="394503"/>
    <lineage>
        <taxon>Bacteria</taxon>
        <taxon>Bacillati</taxon>
        <taxon>Bacillota</taxon>
        <taxon>Clostridia</taxon>
        <taxon>Eubacteriales</taxon>
        <taxon>Oscillospiraceae</taxon>
        <taxon>Ruminiclostridium</taxon>
    </lineage>
</organism>
<proteinExistence type="inferred from homology"/>
<dbReference type="EC" id="4.3.2.1" evidence="1"/>
<dbReference type="EMBL" id="CP001348">
    <property type="protein sequence ID" value="ACL75698.1"/>
    <property type="molecule type" value="Genomic_DNA"/>
</dbReference>
<dbReference type="RefSeq" id="WP_015924846.1">
    <property type="nucleotide sequence ID" value="NC_011898.1"/>
</dbReference>
<dbReference type="SMR" id="B8I1A0"/>
<dbReference type="STRING" id="394503.Ccel_1344"/>
<dbReference type="KEGG" id="cce:Ccel_1344"/>
<dbReference type="eggNOG" id="COG0165">
    <property type="taxonomic scope" value="Bacteria"/>
</dbReference>
<dbReference type="HOGENOM" id="CLU_027272_2_3_9"/>
<dbReference type="OrthoDB" id="9769623at2"/>
<dbReference type="UniPathway" id="UPA00068">
    <property type="reaction ID" value="UER00114"/>
</dbReference>
<dbReference type="Proteomes" id="UP000001349">
    <property type="component" value="Chromosome"/>
</dbReference>
<dbReference type="GO" id="GO:0005829">
    <property type="term" value="C:cytosol"/>
    <property type="evidence" value="ECO:0007669"/>
    <property type="project" value="TreeGrafter"/>
</dbReference>
<dbReference type="GO" id="GO:0004056">
    <property type="term" value="F:argininosuccinate lyase activity"/>
    <property type="evidence" value="ECO:0007669"/>
    <property type="project" value="UniProtKB-UniRule"/>
</dbReference>
<dbReference type="GO" id="GO:0042450">
    <property type="term" value="P:arginine biosynthetic process via ornithine"/>
    <property type="evidence" value="ECO:0007669"/>
    <property type="project" value="InterPro"/>
</dbReference>
<dbReference type="GO" id="GO:0006526">
    <property type="term" value="P:L-arginine biosynthetic process"/>
    <property type="evidence" value="ECO:0007669"/>
    <property type="project" value="UniProtKB-UniRule"/>
</dbReference>
<dbReference type="CDD" id="cd01359">
    <property type="entry name" value="Argininosuccinate_lyase"/>
    <property type="match status" value="1"/>
</dbReference>
<dbReference type="FunFam" id="1.10.275.10:FF:000002">
    <property type="entry name" value="Argininosuccinate lyase"/>
    <property type="match status" value="1"/>
</dbReference>
<dbReference type="FunFam" id="1.10.40.30:FF:000001">
    <property type="entry name" value="Argininosuccinate lyase"/>
    <property type="match status" value="1"/>
</dbReference>
<dbReference type="FunFam" id="1.20.200.10:FF:000002">
    <property type="entry name" value="Argininosuccinate lyase"/>
    <property type="match status" value="1"/>
</dbReference>
<dbReference type="Gene3D" id="1.10.40.30">
    <property type="entry name" value="Fumarase/aspartase (C-terminal domain)"/>
    <property type="match status" value="1"/>
</dbReference>
<dbReference type="Gene3D" id="1.20.200.10">
    <property type="entry name" value="Fumarase/aspartase (Central domain)"/>
    <property type="match status" value="1"/>
</dbReference>
<dbReference type="Gene3D" id="1.10.275.10">
    <property type="entry name" value="Fumarase/aspartase (N-terminal domain)"/>
    <property type="match status" value="1"/>
</dbReference>
<dbReference type="HAMAP" id="MF_00006">
    <property type="entry name" value="Arg_succ_lyase"/>
    <property type="match status" value="1"/>
</dbReference>
<dbReference type="InterPro" id="IPR029419">
    <property type="entry name" value="Arg_succ_lyase_C"/>
</dbReference>
<dbReference type="InterPro" id="IPR009049">
    <property type="entry name" value="Argininosuccinate_lyase"/>
</dbReference>
<dbReference type="InterPro" id="IPR024083">
    <property type="entry name" value="Fumarase/histidase_N"/>
</dbReference>
<dbReference type="InterPro" id="IPR020557">
    <property type="entry name" value="Fumarate_lyase_CS"/>
</dbReference>
<dbReference type="InterPro" id="IPR000362">
    <property type="entry name" value="Fumarate_lyase_fam"/>
</dbReference>
<dbReference type="InterPro" id="IPR022761">
    <property type="entry name" value="Fumarate_lyase_N"/>
</dbReference>
<dbReference type="InterPro" id="IPR008948">
    <property type="entry name" value="L-Aspartase-like"/>
</dbReference>
<dbReference type="NCBIfam" id="TIGR00838">
    <property type="entry name" value="argH"/>
    <property type="match status" value="1"/>
</dbReference>
<dbReference type="PANTHER" id="PTHR43814">
    <property type="entry name" value="ARGININOSUCCINATE LYASE"/>
    <property type="match status" value="1"/>
</dbReference>
<dbReference type="PANTHER" id="PTHR43814:SF1">
    <property type="entry name" value="ARGININOSUCCINATE LYASE"/>
    <property type="match status" value="1"/>
</dbReference>
<dbReference type="Pfam" id="PF14698">
    <property type="entry name" value="ASL_C2"/>
    <property type="match status" value="1"/>
</dbReference>
<dbReference type="Pfam" id="PF00206">
    <property type="entry name" value="Lyase_1"/>
    <property type="match status" value="1"/>
</dbReference>
<dbReference type="PRINTS" id="PR00145">
    <property type="entry name" value="ARGSUCLYASE"/>
</dbReference>
<dbReference type="PRINTS" id="PR00149">
    <property type="entry name" value="FUMRATELYASE"/>
</dbReference>
<dbReference type="SUPFAM" id="SSF48557">
    <property type="entry name" value="L-aspartase-like"/>
    <property type="match status" value="1"/>
</dbReference>
<dbReference type="PROSITE" id="PS00163">
    <property type="entry name" value="FUMARATE_LYASES"/>
    <property type="match status" value="1"/>
</dbReference>
<keyword id="KW-0028">Amino-acid biosynthesis</keyword>
<keyword id="KW-0055">Arginine biosynthesis</keyword>
<keyword id="KW-0963">Cytoplasm</keyword>
<keyword id="KW-0456">Lyase</keyword>
<keyword id="KW-1185">Reference proteome</keyword>
<reference key="1">
    <citation type="submission" date="2009-01" db="EMBL/GenBank/DDBJ databases">
        <title>Complete sequence of Clostridium cellulolyticum H10.</title>
        <authorList>
            <consortium name="US DOE Joint Genome Institute"/>
            <person name="Lucas S."/>
            <person name="Copeland A."/>
            <person name="Lapidus A."/>
            <person name="Glavina del Rio T."/>
            <person name="Dalin E."/>
            <person name="Tice H."/>
            <person name="Bruce D."/>
            <person name="Goodwin L."/>
            <person name="Pitluck S."/>
            <person name="Chertkov O."/>
            <person name="Saunders E."/>
            <person name="Brettin T."/>
            <person name="Detter J.C."/>
            <person name="Han C."/>
            <person name="Larimer F."/>
            <person name="Land M."/>
            <person name="Hauser L."/>
            <person name="Kyrpides N."/>
            <person name="Ivanova N."/>
            <person name="Zhou J."/>
            <person name="Richardson P."/>
        </authorList>
    </citation>
    <scope>NUCLEOTIDE SEQUENCE [LARGE SCALE GENOMIC DNA]</scope>
    <source>
        <strain>ATCC 35319 / DSM 5812 / JCM 6584 / H10</strain>
    </source>
</reference>
<comment type="catalytic activity">
    <reaction evidence="1">
        <text>2-(N(omega)-L-arginino)succinate = fumarate + L-arginine</text>
        <dbReference type="Rhea" id="RHEA:24020"/>
        <dbReference type="ChEBI" id="CHEBI:29806"/>
        <dbReference type="ChEBI" id="CHEBI:32682"/>
        <dbReference type="ChEBI" id="CHEBI:57472"/>
        <dbReference type="EC" id="4.3.2.1"/>
    </reaction>
</comment>
<comment type="pathway">
    <text evidence="1">Amino-acid biosynthesis; L-arginine biosynthesis; L-arginine from L-ornithine and carbamoyl phosphate: step 3/3.</text>
</comment>
<comment type="subcellular location">
    <subcellularLocation>
        <location evidence="1">Cytoplasm</location>
    </subcellularLocation>
</comment>
<comment type="similarity">
    <text evidence="1">Belongs to the lyase 1 family. Argininosuccinate lyase subfamily.</text>
</comment>
<accession>B8I1A0</accession>
<sequence>MKLWGGRFAKGTDKLVDDFNSSIRFDSRMYRHDILGSIAHANMLGKCGIISADESSLIQSSLKNILNDIEAGKIDFEIDAEDIHMNVEKILISRIGDTGKKLHTGRSRNDQVALDIRMYLRDEIISIKEMVAVLLNTLVKMSESNLDTIMPGYTHLQRAQPITLAHHMMAYFEMFKRDYQRLCDCYSRMNILPLGSGALAGTTYPLDRYMVAQELGFDDVTSNSLDGVSDRDFAIELASCLSILMMHLSRLSEEVILWSSHEFSFVELDDAYSTGSSIMPQKKNPDVAELARGKTGRVYGSLMTLLTVMKSLPLAYNKDMQEDKEAIFDAVDTVKMCLPVFSNMIGTMKVRKENMYKAAQGGFTNATDIADYLVKKGIPFRTAHEIIGKMVLYCIENSKAIDDMTMEEFKSFSDKIQEDVYTEISLEKCVSGRKLVGGPARETEEKAIENAKSFLSSLD</sequence>
<feature type="chain" id="PRO_1000116316" description="Argininosuccinate lyase">
    <location>
        <begin position="1"/>
        <end position="459"/>
    </location>
</feature>
<evidence type="ECO:0000255" key="1">
    <source>
        <dbReference type="HAMAP-Rule" id="MF_00006"/>
    </source>
</evidence>
<protein>
    <recommendedName>
        <fullName evidence="1">Argininosuccinate lyase</fullName>
        <shortName evidence="1">ASAL</shortName>
        <ecNumber evidence="1">4.3.2.1</ecNumber>
    </recommendedName>
    <alternativeName>
        <fullName evidence="1">Arginosuccinase</fullName>
    </alternativeName>
</protein>
<name>ARLY_RUMCH</name>